<name>FTSH3_SORC5</name>
<sequence length="602" mass="64372">MNSWFLQVSKRLGPAGRRLWLLGFMGVVLAVTLGLALRAARESATQRTATYTELLQIAQAGQATAVEVSGDRFLVRQAGGAVVTAVVDEPTLRQELVSRFAGAGASVDFASREDPSRAASAVLPVVVLAAVGFALFTVSRRRSPKVFSDVKAGAARAAVRFADVAGMHEVKQELAETVEFLKSPDRFARLGGRPPRGVLLTGEPGTGKTLLARAVACEAGVRFLSASGSSFQEMFVGVGASRVRALFAEARKSAPCIVFIDEIDAVGRARAKGHGDSASAEHDQTLNQLLVEMDGFDHETGIVVIASTNRADMLDPALLRPGRFDRKVTVPLPDVRGREEILNVHAGPIPLQGEVDLSYIARGTPGFSGADLANLLNEAAILAAREGADAVDPTHIDRARDRVLMGLERKGVLVDEDERYATAVHEAGHVAVGLLAPSCDPVHKVSILPRGRALGVTQALPEKDRLMYRKEYLEDQICMLMGGRAAEMVVLGTMTAGASDDIQRASTIAWKMVAELGMSHLGPICVGDGHPSRSPALLDRVDETARALTEAQLSRAIEIVRSRRGEIEALVKALLEKETLGMDEIQACFPADRRPRPEDQAA</sequence>
<evidence type="ECO:0000255" key="1">
    <source>
        <dbReference type="HAMAP-Rule" id="MF_01458"/>
    </source>
</evidence>
<protein>
    <recommendedName>
        <fullName evidence="1">ATP-dependent zinc metalloprotease FtsH 3</fullName>
        <ecNumber evidence="1">3.4.24.-</ecNumber>
    </recommendedName>
</protein>
<accession>A9GAW6</accession>
<dbReference type="EC" id="3.4.24.-" evidence="1"/>
<dbReference type="EMBL" id="AM746676">
    <property type="protein sequence ID" value="CAN92921.1"/>
    <property type="molecule type" value="Genomic_DNA"/>
</dbReference>
<dbReference type="SMR" id="A9GAW6"/>
<dbReference type="STRING" id="448385.sce2762"/>
<dbReference type="KEGG" id="scl:sce2762"/>
<dbReference type="eggNOG" id="COG0465">
    <property type="taxonomic scope" value="Bacteria"/>
</dbReference>
<dbReference type="HOGENOM" id="CLU_000688_16_0_7"/>
<dbReference type="OrthoDB" id="9809379at2"/>
<dbReference type="BioCyc" id="SCEL448385:SCE_RS14160-MONOMER"/>
<dbReference type="Proteomes" id="UP000002139">
    <property type="component" value="Chromosome"/>
</dbReference>
<dbReference type="GO" id="GO:0005886">
    <property type="term" value="C:plasma membrane"/>
    <property type="evidence" value="ECO:0007669"/>
    <property type="project" value="UniProtKB-SubCell"/>
</dbReference>
<dbReference type="GO" id="GO:0005524">
    <property type="term" value="F:ATP binding"/>
    <property type="evidence" value="ECO:0007669"/>
    <property type="project" value="UniProtKB-UniRule"/>
</dbReference>
<dbReference type="GO" id="GO:0016887">
    <property type="term" value="F:ATP hydrolysis activity"/>
    <property type="evidence" value="ECO:0007669"/>
    <property type="project" value="UniProtKB-UniRule"/>
</dbReference>
<dbReference type="GO" id="GO:0004176">
    <property type="term" value="F:ATP-dependent peptidase activity"/>
    <property type="evidence" value="ECO:0007669"/>
    <property type="project" value="InterPro"/>
</dbReference>
<dbReference type="GO" id="GO:0004222">
    <property type="term" value="F:metalloendopeptidase activity"/>
    <property type="evidence" value="ECO:0007669"/>
    <property type="project" value="InterPro"/>
</dbReference>
<dbReference type="GO" id="GO:0008270">
    <property type="term" value="F:zinc ion binding"/>
    <property type="evidence" value="ECO:0007669"/>
    <property type="project" value="UniProtKB-UniRule"/>
</dbReference>
<dbReference type="GO" id="GO:0030163">
    <property type="term" value="P:protein catabolic process"/>
    <property type="evidence" value="ECO:0007669"/>
    <property type="project" value="UniProtKB-UniRule"/>
</dbReference>
<dbReference type="GO" id="GO:0006508">
    <property type="term" value="P:proteolysis"/>
    <property type="evidence" value="ECO:0007669"/>
    <property type="project" value="UniProtKB-KW"/>
</dbReference>
<dbReference type="CDD" id="cd19501">
    <property type="entry name" value="RecA-like_FtsH"/>
    <property type="match status" value="1"/>
</dbReference>
<dbReference type="FunFam" id="1.10.8.60:FF:000001">
    <property type="entry name" value="ATP-dependent zinc metalloprotease FtsH"/>
    <property type="match status" value="1"/>
</dbReference>
<dbReference type="FunFam" id="1.20.58.760:FF:000001">
    <property type="entry name" value="ATP-dependent zinc metalloprotease FtsH"/>
    <property type="match status" value="1"/>
</dbReference>
<dbReference type="FunFam" id="3.40.50.300:FF:000001">
    <property type="entry name" value="ATP-dependent zinc metalloprotease FtsH"/>
    <property type="match status" value="1"/>
</dbReference>
<dbReference type="Gene3D" id="1.10.8.60">
    <property type="match status" value="1"/>
</dbReference>
<dbReference type="Gene3D" id="3.40.50.300">
    <property type="entry name" value="P-loop containing nucleotide triphosphate hydrolases"/>
    <property type="match status" value="1"/>
</dbReference>
<dbReference type="Gene3D" id="1.20.58.760">
    <property type="entry name" value="Peptidase M41"/>
    <property type="match status" value="1"/>
</dbReference>
<dbReference type="HAMAP" id="MF_01458">
    <property type="entry name" value="FtsH"/>
    <property type="match status" value="1"/>
</dbReference>
<dbReference type="InterPro" id="IPR003593">
    <property type="entry name" value="AAA+_ATPase"/>
</dbReference>
<dbReference type="InterPro" id="IPR041569">
    <property type="entry name" value="AAA_lid_3"/>
</dbReference>
<dbReference type="InterPro" id="IPR003959">
    <property type="entry name" value="ATPase_AAA_core"/>
</dbReference>
<dbReference type="InterPro" id="IPR005936">
    <property type="entry name" value="FtsH"/>
</dbReference>
<dbReference type="InterPro" id="IPR027417">
    <property type="entry name" value="P-loop_NTPase"/>
</dbReference>
<dbReference type="InterPro" id="IPR000642">
    <property type="entry name" value="Peptidase_M41"/>
</dbReference>
<dbReference type="InterPro" id="IPR037219">
    <property type="entry name" value="Peptidase_M41-like"/>
</dbReference>
<dbReference type="NCBIfam" id="TIGR01241">
    <property type="entry name" value="FtsH_fam"/>
    <property type="match status" value="1"/>
</dbReference>
<dbReference type="PANTHER" id="PTHR23076:SF97">
    <property type="entry name" value="ATP-DEPENDENT ZINC METALLOPROTEASE YME1L1"/>
    <property type="match status" value="1"/>
</dbReference>
<dbReference type="PANTHER" id="PTHR23076">
    <property type="entry name" value="METALLOPROTEASE M41 FTSH"/>
    <property type="match status" value="1"/>
</dbReference>
<dbReference type="Pfam" id="PF00004">
    <property type="entry name" value="AAA"/>
    <property type="match status" value="1"/>
</dbReference>
<dbReference type="Pfam" id="PF17862">
    <property type="entry name" value="AAA_lid_3"/>
    <property type="match status" value="1"/>
</dbReference>
<dbReference type="Pfam" id="PF01434">
    <property type="entry name" value="Peptidase_M41"/>
    <property type="match status" value="1"/>
</dbReference>
<dbReference type="SMART" id="SM00382">
    <property type="entry name" value="AAA"/>
    <property type="match status" value="1"/>
</dbReference>
<dbReference type="SUPFAM" id="SSF140990">
    <property type="entry name" value="FtsH protease domain-like"/>
    <property type="match status" value="1"/>
</dbReference>
<dbReference type="SUPFAM" id="SSF52540">
    <property type="entry name" value="P-loop containing nucleoside triphosphate hydrolases"/>
    <property type="match status" value="1"/>
</dbReference>
<feature type="chain" id="PRO_0000400391" description="ATP-dependent zinc metalloprotease FtsH 3">
    <location>
        <begin position="1"/>
        <end position="602"/>
    </location>
</feature>
<feature type="topological domain" description="Cytoplasmic" evidence="1">
    <location>
        <begin position="1"/>
        <end position="18"/>
    </location>
</feature>
<feature type="transmembrane region" description="Helical" evidence="1">
    <location>
        <begin position="19"/>
        <end position="39"/>
    </location>
</feature>
<feature type="topological domain" description="Periplasmic" evidence="1">
    <location>
        <begin position="40"/>
        <end position="117"/>
    </location>
</feature>
<feature type="transmembrane region" description="Helical" evidence="1">
    <location>
        <begin position="118"/>
        <end position="138"/>
    </location>
</feature>
<feature type="topological domain" description="Cytoplasmic" evidence="1">
    <location>
        <begin position="139"/>
        <end position="602"/>
    </location>
</feature>
<feature type="active site" evidence="1">
    <location>
        <position position="426"/>
    </location>
</feature>
<feature type="binding site" evidence="1">
    <location>
        <begin position="202"/>
        <end position="209"/>
    </location>
    <ligand>
        <name>ATP</name>
        <dbReference type="ChEBI" id="CHEBI:30616"/>
    </ligand>
</feature>
<feature type="binding site" evidence="1">
    <location>
        <position position="425"/>
    </location>
    <ligand>
        <name>Zn(2+)</name>
        <dbReference type="ChEBI" id="CHEBI:29105"/>
        <note>catalytic</note>
    </ligand>
</feature>
<feature type="binding site" evidence="1">
    <location>
        <position position="429"/>
    </location>
    <ligand>
        <name>Zn(2+)</name>
        <dbReference type="ChEBI" id="CHEBI:29105"/>
        <note>catalytic</note>
    </ligand>
</feature>
<feature type="binding site" evidence="1">
    <location>
        <position position="501"/>
    </location>
    <ligand>
        <name>Zn(2+)</name>
        <dbReference type="ChEBI" id="CHEBI:29105"/>
        <note>catalytic</note>
    </ligand>
</feature>
<reference key="1">
    <citation type="journal article" date="2007" name="Nat. Biotechnol.">
        <title>Complete genome sequence of the myxobacterium Sorangium cellulosum.</title>
        <authorList>
            <person name="Schneiker S."/>
            <person name="Perlova O."/>
            <person name="Kaiser O."/>
            <person name="Gerth K."/>
            <person name="Alici A."/>
            <person name="Altmeyer M.O."/>
            <person name="Bartels D."/>
            <person name="Bekel T."/>
            <person name="Beyer S."/>
            <person name="Bode E."/>
            <person name="Bode H.B."/>
            <person name="Bolten C.J."/>
            <person name="Choudhuri J.V."/>
            <person name="Doss S."/>
            <person name="Elnakady Y.A."/>
            <person name="Frank B."/>
            <person name="Gaigalat L."/>
            <person name="Goesmann A."/>
            <person name="Groeger C."/>
            <person name="Gross F."/>
            <person name="Jelsbak L."/>
            <person name="Jelsbak L."/>
            <person name="Kalinowski J."/>
            <person name="Kegler C."/>
            <person name="Knauber T."/>
            <person name="Konietzny S."/>
            <person name="Kopp M."/>
            <person name="Krause L."/>
            <person name="Krug D."/>
            <person name="Linke B."/>
            <person name="Mahmud T."/>
            <person name="Martinez-Arias R."/>
            <person name="McHardy A.C."/>
            <person name="Merai M."/>
            <person name="Meyer F."/>
            <person name="Mormann S."/>
            <person name="Munoz-Dorado J."/>
            <person name="Perez J."/>
            <person name="Pradella S."/>
            <person name="Rachid S."/>
            <person name="Raddatz G."/>
            <person name="Rosenau F."/>
            <person name="Rueckert C."/>
            <person name="Sasse F."/>
            <person name="Scharfe M."/>
            <person name="Schuster S.C."/>
            <person name="Suen G."/>
            <person name="Treuner-Lange A."/>
            <person name="Velicer G.J."/>
            <person name="Vorholter F.-J."/>
            <person name="Weissman K.J."/>
            <person name="Welch R.D."/>
            <person name="Wenzel S.C."/>
            <person name="Whitworth D.E."/>
            <person name="Wilhelm S."/>
            <person name="Wittmann C."/>
            <person name="Bloecker H."/>
            <person name="Puehler A."/>
            <person name="Mueller R."/>
        </authorList>
    </citation>
    <scope>NUCLEOTIDE SEQUENCE [LARGE SCALE GENOMIC DNA]</scope>
    <source>
        <strain>So ce56</strain>
    </source>
</reference>
<comment type="function">
    <text evidence="1">Acts as a processive, ATP-dependent zinc metallopeptidase for both cytoplasmic and membrane proteins. Plays a role in the quality control of integral membrane proteins.</text>
</comment>
<comment type="cofactor">
    <cofactor evidence="1">
        <name>Zn(2+)</name>
        <dbReference type="ChEBI" id="CHEBI:29105"/>
    </cofactor>
    <text evidence="1">Binds 1 zinc ion per subunit.</text>
</comment>
<comment type="subunit">
    <text evidence="1">Homohexamer.</text>
</comment>
<comment type="subcellular location">
    <subcellularLocation>
        <location evidence="1">Cell inner membrane</location>
        <topology evidence="1">Multi-pass membrane protein</topology>
        <orientation evidence="1">Cytoplasmic side</orientation>
    </subcellularLocation>
</comment>
<comment type="similarity">
    <text evidence="1">In the central section; belongs to the AAA ATPase family.</text>
</comment>
<comment type="similarity">
    <text evidence="1">In the C-terminal section; belongs to the peptidase M41 family.</text>
</comment>
<keyword id="KW-0067">ATP-binding</keyword>
<keyword id="KW-0997">Cell inner membrane</keyword>
<keyword id="KW-1003">Cell membrane</keyword>
<keyword id="KW-0378">Hydrolase</keyword>
<keyword id="KW-0472">Membrane</keyword>
<keyword id="KW-0479">Metal-binding</keyword>
<keyword id="KW-0482">Metalloprotease</keyword>
<keyword id="KW-0547">Nucleotide-binding</keyword>
<keyword id="KW-0645">Protease</keyword>
<keyword id="KW-1185">Reference proteome</keyword>
<keyword id="KW-0812">Transmembrane</keyword>
<keyword id="KW-1133">Transmembrane helix</keyword>
<keyword id="KW-0862">Zinc</keyword>
<proteinExistence type="inferred from homology"/>
<gene>
    <name evidence="1" type="primary">ftsH3</name>
    <name type="ordered locus">sce2762</name>
</gene>
<organism>
    <name type="scientific">Sorangium cellulosum (strain So ce56)</name>
    <name type="common">Polyangium cellulosum (strain So ce56)</name>
    <dbReference type="NCBI Taxonomy" id="448385"/>
    <lineage>
        <taxon>Bacteria</taxon>
        <taxon>Pseudomonadati</taxon>
        <taxon>Myxococcota</taxon>
        <taxon>Polyangia</taxon>
        <taxon>Polyangiales</taxon>
        <taxon>Polyangiaceae</taxon>
        <taxon>Sorangium</taxon>
    </lineage>
</organism>